<comment type="function">
    <text evidence="1">Transcriptional factor involved in regulation of membrane lipid biosynthesis by repressing genes involved in fatty acid and phospholipid metabolism.</text>
</comment>
<comment type="similarity">
    <text evidence="1">Belongs to the FapR family.</text>
</comment>
<comment type="sequence caution" evidence="2">
    <conflict type="erroneous initiation">
        <sequence resource="EMBL-CDS" id="AAT56007"/>
    </conflict>
</comment>
<feature type="chain" id="PRO_0000172812" description="Transcription factor FapR">
    <location>
        <begin position="1"/>
        <end position="197"/>
    </location>
</feature>
<keyword id="KW-0238">DNA-binding</keyword>
<keyword id="KW-0275">Fatty acid biosynthesis</keyword>
<keyword id="KW-0276">Fatty acid metabolism</keyword>
<keyword id="KW-0444">Lipid biosynthesis</keyword>
<keyword id="KW-0443">Lipid metabolism</keyword>
<keyword id="KW-1185">Reference proteome</keyword>
<keyword id="KW-0678">Repressor</keyword>
<keyword id="KW-0804">Transcription</keyword>
<keyword id="KW-0805">Transcription regulation</keyword>
<proteinExistence type="inferred from homology"/>
<name>FAPR_BACAN</name>
<dbReference type="EMBL" id="AE016879">
    <property type="protein sequence ID" value="AAP27720.1"/>
    <property type="molecule type" value="Genomic_DNA"/>
</dbReference>
<dbReference type="EMBL" id="AE017334">
    <property type="protein sequence ID" value="AAT35401.1"/>
    <property type="molecule type" value="Genomic_DNA"/>
</dbReference>
<dbReference type="EMBL" id="AE017225">
    <property type="protein sequence ID" value="AAT56007.1"/>
    <property type="status" value="ALT_INIT"/>
    <property type="molecule type" value="Genomic_DNA"/>
</dbReference>
<dbReference type="RefSeq" id="NP_846234.1">
    <property type="nucleotide sequence ID" value="NC_003997.3"/>
</dbReference>
<dbReference type="RefSeq" id="WP_000747352.1">
    <property type="nucleotide sequence ID" value="NZ_WXXJ01000026.1"/>
</dbReference>
<dbReference type="SMR" id="Q81WI4"/>
<dbReference type="STRING" id="261594.GBAA_3992"/>
<dbReference type="DNASU" id="1087536"/>
<dbReference type="GeneID" id="93007258"/>
<dbReference type="KEGG" id="ban:BA_3992"/>
<dbReference type="KEGG" id="bar:GBAA_3992"/>
<dbReference type="KEGG" id="bat:BAS3705"/>
<dbReference type="PATRIC" id="fig|198094.11.peg.3962"/>
<dbReference type="eggNOG" id="COG1349">
    <property type="taxonomic scope" value="Bacteria"/>
</dbReference>
<dbReference type="eggNOG" id="COG2050">
    <property type="taxonomic scope" value="Bacteria"/>
</dbReference>
<dbReference type="HOGENOM" id="CLU_095708_0_0_9"/>
<dbReference type="OMA" id="GIARGHH"/>
<dbReference type="OrthoDB" id="1706183at2"/>
<dbReference type="Proteomes" id="UP000000427">
    <property type="component" value="Chromosome"/>
</dbReference>
<dbReference type="Proteomes" id="UP000000594">
    <property type="component" value="Chromosome"/>
</dbReference>
<dbReference type="GO" id="GO:0003677">
    <property type="term" value="F:DNA binding"/>
    <property type="evidence" value="ECO:0007669"/>
    <property type="project" value="UniProtKB-KW"/>
</dbReference>
<dbReference type="GO" id="GO:0003700">
    <property type="term" value="F:DNA-binding transcription factor activity"/>
    <property type="evidence" value="ECO:0007669"/>
    <property type="project" value="UniProtKB-UniRule"/>
</dbReference>
<dbReference type="GO" id="GO:0006633">
    <property type="term" value="P:fatty acid biosynthetic process"/>
    <property type="evidence" value="ECO:0007669"/>
    <property type="project" value="UniProtKB-KW"/>
</dbReference>
<dbReference type="GO" id="GO:0045892">
    <property type="term" value="P:negative regulation of DNA-templated transcription"/>
    <property type="evidence" value="ECO:0007669"/>
    <property type="project" value="UniProtKB-UniRule"/>
</dbReference>
<dbReference type="GO" id="GO:0045717">
    <property type="term" value="P:negative regulation of fatty acid biosynthetic process"/>
    <property type="evidence" value="ECO:0007669"/>
    <property type="project" value="UniProtKB-UniRule"/>
</dbReference>
<dbReference type="CDD" id="cd03440">
    <property type="entry name" value="hot_dog"/>
    <property type="match status" value="1"/>
</dbReference>
<dbReference type="Gene3D" id="3.10.129.10">
    <property type="entry name" value="Hotdog Thioesterase"/>
    <property type="match status" value="1"/>
</dbReference>
<dbReference type="Gene3D" id="1.10.10.10">
    <property type="entry name" value="Winged helix-like DNA-binding domain superfamily/Winged helix DNA-binding domain"/>
    <property type="match status" value="1"/>
</dbReference>
<dbReference type="HAMAP" id="MF_01814">
    <property type="entry name" value="Transcrip_fact_FapR"/>
    <property type="match status" value="1"/>
</dbReference>
<dbReference type="InterPro" id="IPR029069">
    <property type="entry name" value="HotDog_dom_sf"/>
</dbReference>
<dbReference type="InterPro" id="IPR006683">
    <property type="entry name" value="Thioestr_dom"/>
</dbReference>
<dbReference type="InterPro" id="IPR017275">
    <property type="entry name" value="Transcription_factor_FapR"/>
</dbReference>
<dbReference type="InterPro" id="IPR036388">
    <property type="entry name" value="WH-like_DNA-bd_sf"/>
</dbReference>
<dbReference type="InterPro" id="IPR036390">
    <property type="entry name" value="WH_DNA-bd_sf"/>
</dbReference>
<dbReference type="NCBIfam" id="NF003359">
    <property type="entry name" value="PRK04424.1"/>
    <property type="match status" value="1"/>
</dbReference>
<dbReference type="Pfam" id="PF03061">
    <property type="entry name" value="4HBT"/>
    <property type="match status" value="1"/>
</dbReference>
<dbReference type="PIRSF" id="PIRSF037733">
    <property type="entry name" value="Transcription_factor_FapR"/>
    <property type="match status" value="1"/>
</dbReference>
<dbReference type="SUPFAM" id="SSF54637">
    <property type="entry name" value="Thioesterase/thiol ester dehydrase-isomerase"/>
    <property type="match status" value="1"/>
</dbReference>
<dbReference type="SUPFAM" id="SSF46785">
    <property type="entry name" value="Winged helix' DNA-binding domain"/>
    <property type="match status" value="1"/>
</dbReference>
<accession>Q81WI4</accession>
<accession>Q6HUN2</accession>
<accession>Q6KJ16</accession>
<evidence type="ECO:0000255" key="1">
    <source>
        <dbReference type="HAMAP-Rule" id="MF_01814"/>
    </source>
</evidence>
<evidence type="ECO:0000305" key="2"/>
<organism>
    <name type="scientific">Bacillus anthracis</name>
    <dbReference type="NCBI Taxonomy" id="1392"/>
    <lineage>
        <taxon>Bacteria</taxon>
        <taxon>Bacillati</taxon>
        <taxon>Bacillota</taxon>
        <taxon>Bacilli</taxon>
        <taxon>Bacillales</taxon>
        <taxon>Bacillaceae</taxon>
        <taxon>Bacillus</taxon>
        <taxon>Bacillus cereus group</taxon>
    </lineage>
</organism>
<protein>
    <recommendedName>
        <fullName evidence="1">Transcription factor FapR</fullName>
    </recommendedName>
    <alternativeName>
        <fullName evidence="1">Fatty acid and phospholipid biosynthesis regulator</fullName>
    </alternativeName>
</protein>
<sequence length="197" mass="22782">MKKRRSKKERQELLQQTIETNPFITDEDLAEKFQVSIQTVRLDRMELSIPELRERIKHVATKQHEEDVKSLPLEEVVGEIIDIELDRHAISIFEVKVEHVFKRNQIARGHHLFAQANSLAVAVIDEELALTAKSTIRYIRPVKLGERVVAKARVEDVENDKGRTVVKVRSFVGEELVFTGTFEMYRSSNYSEEGNNL</sequence>
<reference key="1">
    <citation type="journal article" date="2003" name="Nature">
        <title>The genome sequence of Bacillus anthracis Ames and comparison to closely related bacteria.</title>
        <authorList>
            <person name="Read T.D."/>
            <person name="Peterson S.N."/>
            <person name="Tourasse N.J."/>
            <person name="Baillie L.W."/>
            <person name="Paulsen I.T."/>
            <person name="Nelson K.E."/>
            <person name="Tettelin H."/>
            <person name="Fouts D.E."/>
            <person name="Eisen J.A."/>
            <person name="Gill S.R."/>
            <person name="Holtzapple E.K."/>
            <person name="Okstad O.A."/>
            <person name="Helgason E."/>
            <person name="Rilstone J."/>
            <person name="Wu M."/>
            <person name="Kolonay J.F."/>
            <person name="Beanan M.J."/>
            <person name="Dodson R.J."/>
            <person name="Brinkac L.M."/>
            <person name="Gwinn M.L."/>
            <person name="DeBoy R.T."/>
            <person name="Madpu R."/>
            <person name="Daugherty S.C."/>
            <person name="Durkin A.S."/>
            <person name="Haft D.H."/>
            <person name="Nelson W.C."/>
            <person name="Peterson J.D."/>
            <person name="Pop M."/>
            <person name="Khouri H.M."/>
            <person name="Radune D."/>
            <person name="Benton J.L."/>
            <person name="Mahamoud Y."/>
            <person name="Jiang L."/>
            <person name="Hance I.R."/>
            <person name="Weidman J.F."/>
            <person name="Berry K.J."/>
            <person name="Plaut R.D."/>
            <person name="Wolf A.M."/>
            <person name="Watkins K.L."/>
            <person name="Nierman W.C."/>
            <person name="Hazen A."/>
            <person name="Cline R.T."/>
            <person name="Redmond C."/>
            <person name="Thwaite J.E."/>
            <person name="White O."/>
            <person name="Salzberg S.L."/>
            <person name="Thomason B."/>
            <person name="Friedlander A.M."/>
            <person name="Koehler T.M."/>
            <person name="Hanna P.C."/>
            <person name="Kolstoe A.-B."/>
            <person name="Fraser C.M."/>
        </authorList>
    </citation>
    <scope>NUCLEOTIDE SEQUENCE [LARGE SCALE GENOMIC DNA]</scope>
    <source>
        <strain>Ames / isolate Porton</strain>
    </source>
</reference>
<reference key="2">
    <citation type="journal article" date="2009" name="J. Bacteriol.">
        <title>The complete genome sequence of Bacillus anthracis Ames 'Ancestor'.</title>
        <authorList>
            <person name="Ravel J."/>
            <person name="Jiang L."/>
            <person name="Stanley S.T."/>
            <person name="Wilson M.R."/>
            <person name="Decker R.S."/>
            <person name="Read T.D."/>
            <person name="Worsham P."/>
            <person name="Keim P.S."/>
            <person name="Salzberg S.L."/>
            <person name="Fraser-Liggett C.M."/>
            <person name="Rasko D.A."/>
        </authorList>
    </citation>
    <scope>NUCLEOTIDE SEQUENCE [LARGE SCALE GENOMIC DNA]</scope>
    <source>
        <strain>Ames ancestor</strain>
    </source>
</reference>
<reference key="3">
    <citation type="submission" date="2004-01" db="EMBL/GenBank/DDBJ databases">
        <title>Complete genome sequence of Bacillus anthracis Sterne.</title>
        <authorList>
            <person name="Brettin T.S."/>
            <person name="Bruce D."/>
            <person name="Challacombe J.F."/>
            <person name="Gilna P."/>
            <person name="Han C."/>
            <person name="Hill K."/>
            <person name="Hitchcock P."/>
            <person name="Jackson P."/>
            <person name="Keim P."/>
            <person name="Longmire J."/>
            <person name="Lucas S."/>
            <person name="Okinaka R."/>
            <person name="Richardson P."/>
            <person name="Rubin E."/>
            <person name="Tice H."/>
        </authorList>
    </citation>
    <scope>NUCLEOTIDE SEQUENCE [LARGE SCALE GENOMIC DNA]</scope>
    <source>
        <strain>Sterne</strain>
    </source>
</reference>
<gene>
    <name evidence="1" type="primary">fapR</name>
    <name type="ordered locus">BA_3992</name>
    <name type="ordered locus">GBAA_3992</name>
    <name type="ordered locus">BAS3705</name>
</gene>